<protein>
    <recommendedName>
        <fullName evidence="1">Integration host factor subunit alpha</fullName>
        <shortName evidence="1">IHF-alpha</shortName>
    </recommendedName>
</protein>
<accession>B4RB18</accession>
<proteinExistence type="inferred from homology"/>
<evidence type="ECO:0000255" key="1">
    <source>
        <dbReference type="HAMAP-Rule" id="MF_00380"/>
    </source>
</evidence>
<keyword id="KW-0233">DNA recombination</keyword>
<keyword id="KW-0238">DNA-binding</keyword>
<keyword id="KW-1185">Reference proteome</keyword>
<keyword id="KW-0804">Transcription</keyword>
<keyword id="KW-0805">Transcription regulation</keyword>
<keyword id="KW-0810">Translation regulation</keyword>
<sequence>MKGATVTRADLCEAVHEQVGLTRQDCAELVERVLELMCQALERGEQVKLSGFGVFQVRSKRARMGRNPKTGEPAAIEPRRVIGFRASQVMKARVDQALSR</sequence>
<dbReference type="EMBL" id="CP000747">
    <property type="protein sequence ID" value="ACG78069.1"/>
    <property type="molecule type" value="Genomic_DNA"/>
</dbReference>
<dbReference type="RefSeq" id="WP_012522211.1">
    <property type="nucleotide sequence ID" value="NC_011144.1"/>
</dbReference>
<dbReference type="SMR" id="B4RB18"/>
<dbReference type="STRING" id="450851.PHZ_c1658"/>
<dbReference type="KEGG" id="pzu:PHZ_c1658"/>
<dbReference type="eggNOG" id="COG0776">
    <property type="taxonomic scope" value="Bacteria"/>
</dbReference>
<dbReference type="HOGENOM" id="CLU_105066_1_1_5"/>
<dbReference type="OrthoDB" id="9804203at2"/>
<dbReference type="Proteomes" id="UP000001868">
    <property type="component" value="Chromosome"/>
</dbReference>
<dbReference type="GO" id="GO:0005829">
    <property type="term" value="C:cytosol"/>
    <property type="evidence" value="ECO:0007669"/>
    <property type="project" value="TreeGrafter"/>
</dbReference>
<dbReference type="GO" id="GO:0003677">
    <property type="term" value="F:DNA binding"/>
    <property type="evidence" value="ECO:0007669"/>
    <property type="project" value="UniProtKB-UniRule"/>
</dbReference>
<dbReference type="GO" id="GO:0030527">
    <property type="term" value="F:structural constituent of chromatin"/>
    <property type="evidence" value="ECO:0007669"/>
    <property type="project" value="InterPro"/>
</dbReference>
<dbReference type="GO" id="GO:0006310">
    <property type="term" value="P:DNA recombination"/>
    <property type="evidence" value="ECO:0007669"/>
    <property type="project" value="UniProtKB-UniRule"/>
</dbReference>
<dbReference type="GO" id="GO:0009893">
    <property type="term" value="P:positive regulation of metabolic process"/>
    <property type="evidence" value="ECO:0007669"/>
    <property type="project" value="UniProtKB-ARBA"/>
</dbReference>
<dbReference type="GO" id="GO:0006355">
    <property type="term" value="P:regulation of DNA-templated transcription"/>
    <property type="evidence" value="ECO:0007669"/>
    <property type="project" value="UniProtKB-UniRule"/>
</dbReference>
<dbReference type="GO" id="GO:0006417">
    <property type="term" value="P:regulation of translation"/>
    <property type="evidence" value="ECO:0007669"/>
    <property type="project" value="UniProtKB-UniRule"/>
</dbReference>
<dbReference type="CDD" id="cd13835">
    <property type="entry name" value="IHF_A"/>
    <property type="match status" value="1"/>
</dbReference>
<dbReference type="Gene3D" id="4.10.520.10">
    <property type="entry name" value="IHF-like DNA-binding proteins"/>
    <property type="match status" value="1"/>
</dbReference>
<dbReference type="HAMAP" id="MF_00380">
    <property type="entry name" value="IHF_alpha"/>
    <property type="match status" value="1"/>
</dbReference>
<dbReference type="InterPro" id="IPR000119">
    <property type="entry name" value="Hist_DNA-bd"/>
</dbReference>
<dbReference type="InterPro" id="IPR020816">
    <property type="entry name" value="Histone-like_DNA-bd_CS"/>
</dbReference>
<dbReference type="InterPro" id="IPR010992">
    <property type="entry name" value="IHF-like_DNA-bd_dom_sf"/>
</dbReference>
<dbReference type="InterPro" id="IPR005684">
    <property type="entry name" value="IHF_alpha"/>
</dbReference>
<dbReference type="NCBIfam" id="TIGR00987">
    <property type="entry name" value="himA"/>
    <property type="match status" value="1"/>
</dbReference>
<dbReference type="NCBIfam" id="NF001401">
    <property type="entry name" value="PRK00285.1"/>
    <property type="match status" value="1"/>
</dbReference>
<dbReference type="PANTHER" id="PTHR33175">
    <property type="entry name" value="DNA-BINDING PROTEIN HU"/>
    <property type="match status" value="1"/>
</dbReference>
<dbReference type="PANTHER" id="PTHR33175:SF2">
    <property type="entry name" value="INTEGRATION HOST FACTOR SUBUNIT ALPHA"/>
    <property type="match status" value="1"/>
</dbReference>
<dbReference type="Pfam" id="PF00216">
    <property type="entry name" value="Bac_DNA_binding"/>
    <property type="match status" value="1"/>
</dbReference>
<dbReference type="PRINTS" id="PR01727">
    <property type="entry name" value="DNABINDINGHU"/>
</dbReference>
<dbReference type="SMART" id="SM00411">
    <property type="entry name" value="BHL"/>
    <property type="match status" value="1"/>
</dbReference>
<dbReference type="SUPFAM" id="SSF47729">
    <property type="entry name" value="IHF-like DNA-binding proteins"/>
    <property type="match status" value="1"/>
</dbReference>
<dbReference type="PROSITE" id="PS00045">
    <property type="entry name" value="HISTONE_LIKE"/>
    <property type="match status" value="1"/>
</dbReference>
<gene>
    <name evidence="1" type="primary">ihfA</name>
    <name evidence="1" type="synonym">himA</name>
    <name type="ordered locus">PHZ_c1658</name>
</gene>
<reference key="1">
    <citation type="journal article" date="2008" name="BMC Genomics">
        <title>Complete genome of Phenylobacterium zucineum - a novel facultative intracellular bacterium isolated from human erythroleukemia cell line K562.</title>
        <authorList>
            <person name="Luo Y."/>
            <person name="Xu X."/>
            <person name="Ding Z."/>
            <person name="Liu Z."/>
            <person name="Zhang B."/>
            <person name="Yan Z."/>
            <person name="Sun J."/>
            <person name="Hu S."/>
            <person name="Hu X."/>
        </authorList>
    </citation>
    <scope>NUCLEOTIDE SEQUENCE [LARGE SCALE GENOMIC DNA]</scope>
    <source>
        <strain>HLK1</strain>
    </source>
</reference>
<feature type="chain" id="PRO_1000122152" description="Integration host factor subunit alpha">
    <location>
        <begin position="1"/>
        <end position="100"/>
    </location>
</feature>
<name>IHFA_PHEZH</name>
<organism>
    <name type="scientific">Phenylobacterium zucineum (strain HLK1)</name>
    <dbReference type="NCBI Taxonomy" id="450851"/>
    <lineage>
        <taxon>Bacteria</taxon>
        <taxon>Pseudomonadati</taxon>
        <taxon>Pseudomonadota</taxon>
        <taxon>Alphaproteobacteria</taxon>
        <taxon>Caulobacterales</taxon>
        <taxon>Caulobacteraceae</taxon>
        <taxon>Phenylobacterium</taxon>
    </lineage>
</organism>
<comment type="function">
    <text evidence="1">This protein is one of the two subunits of integration host factor, a specific DNA-binding protein that functions in genetic recombination as well as in transcriptional and translational control.</text>
</comment>
<comment type="subunit">
    <text evidence="1">Heterodimer of an alpha and a beta chain.</text>
</comment>
<comment type="similarity">
    <text evidence="1">Belongs to the bacterial histone-like protein family.</text>
</comment>